<sequence length="131" mass="14722">MDDADYDNDDVGGDDFDDVDEDVDEDINQEEEADNIEIIAPGGAGGGGVPKSKRITTKYMTKYERARVLGTRALQIAMCAPIMVELDGETDPLQIAMKELKQKKIPIIIRRYLPDHSYEDWSIDELIMVDN</sequence>
<name>RPAB2_DROME</name>
<feature type="chain" id="PRO_0000133803" description="DNA-directed RNA polymerases I, II, and III subunit RPABC2">
    <location>
        <begin position="1"/>
        <end position="131"/>
    </location>
</feature>
<feature type="region of interest" description="Disordered" evidence="2">
    <location>
        <begin position="1"/>
        <end position="24"/>
    </location>
</feature>
<proteinExistence type="evidence at protein level"/>
<comment type="function">
    <text evidence="1">DNA-dependent RNA polymerases catalyze the transcription of DNA into RNA using the four ribonucleoside triphosphates as substrates. Common component of RNA polymerases I, II and III which synthesize ribosomal RNA precursors, mRNA precursors and many functional non-coding RNAs, and small RNAs, such as 5S rRNA and tRNAs, respectively. Pol II is the central component of the basal RNA polymerase II transcription machinery. Pols are composed of mobile elements that move relative to each other. In Pol II, Polr2F/RPB6 is part of the clamp element and together with parts of Polr2A/RPB1 and RPB2 forms a pocket to which the Polr2D/RPB4-Polr2G/RPB7 subcomplex binds (By similarity).</text>
</comment>
<comment type="subunit">
    <text evidence="1">Component of the RNA polymerase I (Pol I), RNA polymerase II (Pol II) and RNA polymerase III (Pol III) complexes consisting of at least 13, 12 and 17 subunits, respectively.</text>
</comment>
<comment type="subcellular location">
    <subcellularLocation>
        <location>Nucleus</location>
    </subcellularLocation>
</comment>
<comment type="similarity">
    <text evidence="4">Belongs to the archaeal Rpo6/eukaryotic RPB6 RNA polymerase subunit family.</text>
</comment>
<dbReference type="EMBL" id="Z47726">
    <property type="protein sequence ID" value="CAA87655.1"/>
    <property type="molecule type" value="mRNA"/>
</dbReference>
<dbReference type="EMBL" id="AE014297">
    <property type="protein sequence ID" value="AAF52039.1"/>
    <property type="molecule type" value="Genomic_DNA"/>
</dbReference>
<dbReference type="EMBL" id="BT001786">
    <property type="protein sequence ID" value="AAN71541.1"/>
    <property type="molecule type" value="mRNA"/>
</dbReference>
<dbReference type="PIR" id="S53013">
    <property type="entry name" value="S53013"/>
</dbReference>
<dbReference type="RefSeq" id="NP_524910.1">
    <property type="nucleotide sequence ID" value="NM_080171.4"/>
</dbReference>
<dbReference type="PDB" id="9MU9">
    <property type="method" value="EM"/>
    <property type="resolution" value="7.80 A"/>
    <property type="chains" value="F=47-130"/>
</dbReference>
<dbReference type="PDBsum" id="9MU9"/>
<dbReference type="EMDB" id="EMD-48626"/>
<dbReference type="SMR" id="Q24320"/>
<dbReference type="BioGRID" id="71310">
    <property type="interactions" value="5"/>
</dbReference>
<dbReference type="ComplexPortal" id="CPX-2602">
    <property type="entry name" value="DNA-directed RNA polymerase I complex"/>
</dbReference>
<dbReference type="ComplexPortal" id="CPX-2625">
    <property type="entry name" value="DNA-directed RNA polymerase II complex"/>
</dbReference>
<dbReference type="ComplexPortal" id="CPX-2628">
    <property type="entry name" value="DNA-directed RNA polymerase III complex"/>
</dbReference>
<dbReference type="DIP" id="DIP-17541N"/>
<dbReference type="FunCoup" id="Q24320">
    <property type="interactions" value="1164"/>
</dbReference>
<dbReference type="IntAct" id="Q24320">
    <property type="interactions" value="2"/>
</dbReference>
<dbReference type="STRING" id="7227.FBpp0078433"/>
<dbReference type="PaxDb" id="7227-FBpp0078433"/>
<dbReference type="DNASU" id="48312"/>
<dbReference type="EnsemblMetazoa" id="FBtr0078787">
    <property type="protein sequence ID" value="FBpp0078433"/>
    <property type="gene ID" value="FBgn0003275"/>
</dbReference>
<dbReference type="GeneID" id="48312"/>
<dbReference type="KEGG" id="dme:Dmel_CG1163"/>
<dbReference type="AGR" id="FB:FBgn0003275"/>
<dbReference type="CTD" id="5435"/>
<dbReference type="FlyBase" id="FBgn0003275">
    <property type="gene designation" value="Polr2F"/>
</dbReference>
<dbReference type="VEuPathDB" id="VectorBase:FBgn0003275"/>
<dbReference type="eggNOG" id="KOG3405">
    <property type="taxonomic scope" value="Eukaryota"/>
</dbReference>
<dbReference type="GeneTree" id="ENSGT00390000010415"/>
<dbReference type="HOGENOM" id="CLU_112527_2_0_1"/>
<dbReference type="InParanoid" id="Q24320"/>
<dbReference type="OMA" id="TYMTKYE"/>
<dbReference type="OrthoDB" id="259769at2759"/>
<dbReference type="PhylomeDB" id="Q24320"/>
<dbReference type="Reactome" id="R-DME-112382">
    <property type="pathway name" value="Formation of RNA Pol II elongation complex"/>
</dbReference>
<dbReference type="Reactome" id="R-DME-113418">
    <property type="pathway name" value="Formation of the Early Elongation Complex"/>
</dbReference>
<dbReference type="Reactome" id="R-DME-5578749">
    <property type="pathway name" value="Transcriptional regulation by small RNAs"/>
</dbReference>
<dbReference type="Reactome" id="R-DME-674695">
    <property type="pathway name" value="RNA Polymerase II Pre-transcription Events"/>
</dbReference>
<dbReference type="Reactome" id="R-DME-6781823">
    <property type="pathway name" value="Formation of TC-NER Pre-Incision Complex"/>
</dbReference>
<dbReference type="Reactome" id="R-DME-6782135">
    <property type="pathway name" value="Dual incision in TC-NER"/>
</dbReference>
<dbReference type="Reactome" id="R-DME-6782210">
    <property type="pathway name" value="Gap-filling DNA repair synthesis and ligation in TC-NER"/>
</dbReference>
<dbReference type="Reactome" id="R-DME-6796648">
    <property type="pathway name" value="TP53 Regulates Transcription of DNA Repair Genes"/>
</dbReference>
<dbReference type="Reactome" id="R-DME-6807505">
    <property type="pathway name" value="RNA polymerase II transcribes snRNA genes"/>
</dbReference>
<dbReference type="Reactome" id="R-DME-72086">
    <property type="pathway name" value="mRNA Capping"/>
</dbReference>
<dbReference type="Reactome" id="R-DME-72163">
    <property type="pathway name" value="mRNA Splicing - Major Pathway"/>
</dbReference>
<dbReference type="Reactome" id="R-DME-72165">
    <property type="pathway name" value="mRNA Splicing - Minor Pathway"/>
</dbReference>
<dbReference type="Reactome" id="R-DME-72203">
    <property type="pathway name" value="Processing of Capped Intron-Containing Pre-mRNA"/>
</dbReference>
<dbReference type="Reactome" id="R-DME-73762">
    <property type="pathway name" value="RNA Polymerase I Transcription Initiation"/>
</dbReference>
<dbReference type="Reactome" id="R-DME-73772">
    <property type="pathway name" value="RNA Polymerase I Promoter Escape"/>
</dbReference>
<dbReference type="Reactome" id="R-DME-73776">
    <property type="pathway name" value="RNA Polymerase II Promoter Escape"/>
</dbReference>
<dbReference type="Reactome" id="R-DME-73779">
    <property type="pathway name" value="RNA Polymerase II Transcription Pre-Initiation And Promoter Opening"/>
</dbReference>
<dbReference type="Reactome" id="R-DME-75953">
    <property type="pathway name" value="RNA Polymerase II Transcription Initiation"/>
</dbReference>
<dbReference type="Reactome" id="R-DME-75955">
    <property type="pathway name" value="RNA Polymerase II Transcription Elongation"/>
</dbReference>
<dbReference type="Reactome" id="R-DME-76042">
    <property type="pathway name" value="RNA Polymerase II Transcription Initiation And Promoter Clearance"/>
</dbReference>
<dbReference type="Reactome" id="R-DME-76061">
    <property type="pathway name" value="RNA Polymerase III Transcription Initiation From Type 1 Promoter"/>
</dbReference>
<dbReference type="Reactome" id="R-DME-76066">
    <property type="pathway name" value="RNA Polymerase III Transcription Initiation From Type 2 Promoter"/>
</dbReference>
<dbReference type="Reactome" id="R-DME-77075">
    <property type="pathway name" value="RNA Pol II CTD phosphorylation and interaction with CE"/>
</dbReference>
<dbReference type="Reactome" id="R-DME-9018519">
    <property type="pathway name" value="Estrogen-dependent gene expression"/>
</dbReference>
<dbReference type="BioGRID-ORCS" id="48312">
    <property type="hits" value="0 hits in 1 CRISPR screen"/>
</dbReference>
<dbReference type="GenomeRNAi" id="48312"/>
<dbReference type="PRO" id="PR:Q24320"/>
<dbReference type="Proteomes" id="UP000000803">
    <property type="component" value="Chromosome 3R"/>
</dbReference>
<dbReference type="Bgee" id="FBgn0003275">
    <property type="expression patterns" value="Expressed in adult enteroendocrine precursor cell in adult midgut (Drosophila) and 155 other cell types or tissues"/>
</dbReference>
<dbReference type="ExpressionAtlas" id="Q24320">
    <property type="expression patterns" value="baseline and differential"/>
</dbReference>
<dbReference type="GO" id="GO:0005736">
    <property type="term" value="C:RNA polymerase I complex"/>
    <property type="evidence" value="ECO:0000250"/>
    <property type="project" value="FlyBase"/>
</dbReference>
<dbReference type="GO" id="GO:0005665">
    <property type="term" value="C:RNA polymerase II, core complex"/>
    <property type="evidence" value="ECO:0000314"/>
    <property type="project" value="FlyBase"/>
</dbReference>
<dbReference type="GO" id="GO:0005666">
    <property type="term" value="C:RNA polymerase III complex"/>
    <property type="evidence" value="ECO:0000250"/>
    <property type="project" value="FlyBase"/>
</dbReference>
<dbReference type="GO" id="GO:0003677">
    <property type="term" value="F:DNA binding"/>
    <property type="evidence" value="ECO:0007669"/>
    <property type="project" value="InterPro"/>
</dbReference>
<dbReference type="GO" id="GO:0003899">
    <property type="term" value="F:DNA-directed RNA polymerase activity"/>
    <property type="evidence" value="ECO:0007669"/>
    <property type="project" value="InterPro"/>
</dbReference>
<dbReference type="GO" id="GO:0006360">
    <property type="term" value="P:transcription by RNA polymerase I"/>
    <property type="evidence" value="ECO:0000250"/>
    <property type="project" value="FlyBase"/>
</dbReference>
<dbReference type="GO" id="GO:0006366">
    <property type="term" value="P:transcription by RNA polymerase II"/>
    <property type="evidence" value="ECO:0000250"/>
    <property type="project" value="FlyBase"/>
</dbReference>
<dbReference type="GO" id="GO:0042797">
    <property type="term" value="P:tRNA transcription by RNA polymerase III"/>
    <property type="evidence" value="ECO:0000250"/>
    <property type="project" value="FlyBase"/>
</dbReference>
<dbReference type="FunFam" id="3.90.940.10:FF:000003">
    <property type="entry name" value="DNA-directed RNA polymerases I, II, and III subunit RPABC2"/>
    <property type="match status" value="1"/>
</dbReference>
<dbReference type="Gene3D" id="3.90.940.10">
    <property type="match status" value="1"/>
</dbReference>
<dbReference type="InterPro" id="IPR020708">
    <property type="entry name" value="DNA-dir_RNA_polK_14-18kDa_CS"/>
</dbReference>
<dbReference type="InterPro" id="IPR006110">
    <property type="entry name" value="Pol_omega/Rpo6/RPB6"/>
</dbReference>
<dbReference type="InterPro" id="IPR028363">
    <property type="entry name" value="RPB6"/>
</dbReference>
<dbReference type="InterPro" id="IPR036161">
    <property type="entry name" value="RPB6/omega-like_sf"/>
</dbReference>
<dbReference type="InterPro" id="IPR006111">
    <property type="entry name" value="Rpo6/Rpb6"/>
</dbReference>
<dbReference type="NCBIfam" id="NF002208">
    <property type="entry name" value="PRK01099.1-3"/>
    <property type="match status" value="1"/>
</dbReference>
<dbReference type="PANTHER" id="PTHR47227">
    <property type="entry name" value="DNA-DIRECTED RNA POLYMERASE SUBUNIT K"/>
    <property type="match status" value="1"/>
</dbReference>
<dbReference type="PANTHER" id="PTHR47227:SF5">
    <property type="entry name" value="DNA-DIRECTED RNA POLYMERASES I, II, AND III SUBUNIT RPABC2"/>
    <property type="match status" value="1"/>
</dbReference>
<dbReference type="Pfam" id="PF01192">
    <property type="entry name" value="RNA_pol_Rpb6"/>
    <property type="match status" value="1"/>
</dbReference>
<dbReference type="PIRSF" id="PIRSF500154">
    <property type="entry name" value="RPB6"/>
    <property type="match status" value="1"/>
</dbReference>
<dbReference type="PIRSF" id="PIRSF000778">
    <property type="entry name" value="RpoK/RPB6"/>
    <property type="match status" value="1"/>
</dbReference>
<dbReference type="SMART" id="SM01409">
    <property type="entry name" value="RNA_pol_Rpb6"/>
    <property type="match status" value="1"/>
</dbReference>
<dbReference type="SUPFAM" id="SSF63562">
    <property type="entry name" value="RPB6/omega subunit-like"/>
    <property type="match status" value="1"/>
</dbReference>
<dbReference type="PROSITE" id="PS01111">
    <property type="entry name" value="RNA_POL_K_14KD"/>
    <property type="match status" value="1"/>
</dbReference>
<evidence type="ECO:0000250" key="1"/>
<evidence type="ECO:0000256" key="2">
    <source>
        <dbReference type="SAM" id="MobiDB-lite"/>
    </source>
</evidence>
<evidence type="ECO:0000303" key="3">
    <source>
    </source>
</evidence>
<evidence type="ECO:0000305" key="4"/>
<evidence type="ECO:0000312" key="5">
    <source>
        <dbReference type="FlyBase" id="FBgn0003275"/>
    </source>
</evidence>
<accession>Q24320</accession>
<accession>Q9VNA7</accession>
<organism>
    <name type="scientific">Drosophila melanogaster</name>
    <name type="common">Fruit fly</name>
    <dbReference type="NCBI Taxonomy" id="7227"/>
    <lineage>
        <taxon>Eukaryota</taxon>
        <taxon>Metazoa</taxon>
        <taxon>Ecdysozoa</taxon>
        <taxon>Arthropoda</taxon>
        <taxon>Hexapoda</taxon>
        <taxon>Insecta</taxon>
        <taxon>Pterygota</taxon>
        <taxon>Neoptera</taxon>
        <taxon>Endopterygota</taxon>
        <taxon>Diptera</taxon>
        <taxon>Brachycera</taxon>
        <taxon>Muscomorpha</taxon>
        <taxon>Ephydroidea</taxon>
        <taxon>Drosophilidae</taxon>
        <taxon>Drosophila</taxon>
        <taxon>Sophophora</taxon>
    </lineage>
</organism>
<protein>
    <recommendedName>
        <fullName>DNA-directed RNA polymerases I, II, and III subunit RPABC2</fullName>
        <shortName>RNA polymerases I, II, and III subunit ABC2</shortName>
    </recommendedName>
    <alternativeName>
        <fullName evidence="5">RNA polymerase II, I and III subunit F</fullName>
    </alternativeName>
    <alternativeName>
        <fullName evidence="3">RPB6 homolog</fullName>
    </alternativeName>
</protein>
<gene>
    <name evidence="5" type="primary">Polr2F</name>
    <name evidence="3" type="synonym">RpABC14</name>
    <name evidence="4" type="synonym">RPB6</name>
    <name evidence="5" type="synonym">RpII18</name>
    <name evidence="5" type="ORF">CG1163</name>
</gene>
<reference key="1">
    <citation type="journal article" date="1995" name="Mol. Cell. Biol.">
        <title>Four subunits that are shared by the three classes of RNA polymerase are functionally interchangeable between Homo sapiens and Saccharomyces cerevisiae.</title>
        <authorList>
            <person name="Shpakovski G.V."/>
            <person name="Acker J."/>
            <person name="Wintzerith M."/>
            <person name="Lacroix J.F."/>
            <person name="Thuriaux P."/>
            <person name="Vigneron M."/>
        </authorList>
    </citation>
    <scope>NUCLEOTIDE SEQUENCE [MRNA]</scope>
</reference>
<reference key="2">
    <citation type="journal article" date="2000" name="Science">
        <title>The genome sequence of Drosophila melanogaster.</title>
        <authorList>
            <person name="Adams M.D."/>
            <person name="Celniker S.E."/>
            <person name="Holt R.A."/>
            <person name="Evans C.A."/>
            <person name="Gocayne J.D."/>
            <person name="Amanatides P.G."/>
            <person name="Scherer S.E."/>
            <person name="Li P.W."/>
            <person name="Hoskins R.A."/>
            <person name="Galle R.F."/>
            <person name="George R.A."/>
            <person name="Lewis S.E."/>
            <person name="Richards S."/>
            <person name="Ashburner M."/>
            <person name="Henderson S.N."/>
            <person name="Sutton G.G."/>
            <person name="Wortman J.R."/>
            <person name="Yandell M.D."/>
            <person name="Zhang Q."/>
            <person name="Chen L.X."/>
            <person name="Brandon R.C."/>
            <person name="Rogers Y.-H.C."/>
            <person name="Blazej R.G."/>
            <person name="Champe M."/>
            <person name="Pfeiffer B.D."/>
            <person name="Wan K.H."/>
            <person name="Doyle C."/>
            <person name="Baxter E.G."/>
            <person name="Helt G."/>
            <person name="Nelson C.R."/>
            <person name="Miklos G.L.G."/>
            <person name="Abril J.F."/>
            <person name="Agbayani A."/>
            <person name="An H.-J."/>
            <person name="Andrews-Pfannkoch C."/>
            <person name="Baldwin D."/>
            <person name="Ballew R.M."/>
            <person name="Basu A."/>
            <person name="Baxendale J."/>
            <person name="Bayraktaroglu L."/>
            <person name="Beasley E.M."/>
            <person name="Beeson K.Y."/>
            <person name="Benos P.V."/>
            <person name="Berman B.P."/>
            <person name="Bhandari D."/>
            <person name="Bolshakov S."/>
            <person name="Borkova D."/>
            <person name="Botchan M.R."/>
            <person name="Bouck J."/>
            <person name="Brokstein P."/>
            <person name="Brottier P."/>
            <person name="Burtis K.C."/>
            <person name="Busam D.A."/>
            <person name="Butler H."/>
            <person name="Cadieu E."/>
            <person name="Center A."/>
            <person name="Chandra I."/>
            <person name="Cherry J.M."/>
            <person name="Cawley S."/>
            <person name="Dahlke C."/>
            <person name="Davenport L.B."/>
            <person name="Davies P."/>
            <person name="de Pablos B."/>
            <person name="Delcher A."/>
            <person name="Deng Z."/>
            <person name="Mays A.D."/>
            <person name="Dew I."/>
            <person name="Dietz S.M."/>
            <person name="Dodson K."/>
            <person name="Doup L.E."/>
            <person name="Downes M."/>
            <person name="Dugan-Rocha S."/>
            <person name="Dunkov B.C."/>
            <person name="Dunn P."/>
            <person name="Durbin K.J."/>
            <person name="Evangelista C.C."/>
            <person name="Ferraz C."/>
            <person name="Ferriera S."/>
            <person name="Fleischmann W."/>
            <person name="Fosler C."/>
            <person name="Gabrielian A.E."/>
            <person name="Garg N.S."/>
            <person name="Gelbart W.M."/>
            <person name="Glasser K."/>
            <person name="Glodek A."/>
            <person name="Gong F."/>
            <person name="Gorrell J.H."/>
            <person name="Gu Z."/>
            <person name="Guan P."/>
            <person name="Harris M."/>
            <person name="Harris N.L."/>
            <person name="Harvey D.A."/>
            <person name="Heiman T.J."/>
            <person name="Hernandez J.R."/>
            <person name="Houck J."/>
            <person name="Hostin D."/>
            <person name="Houston K.A."/>
            <person name="Howland T.J."/>
            <person name="Wei M.-H."/>
            <person name="Ibegwam C."/>
            <person name="Jalali M."/>
            <person name="Kalush F."/>
            <person name="Karpen G.H."/>
            <person name="Ke Z."/>
            <person name="Kennison J.A."/>
            <person name="Ketchum K.A."/>
            <person name="Kimmel B.E."/>
            <person name="Kodira C.D."/>
            <person name="Kraft C.L."/>
            <person name="Kravitz S."/>
            <person name="Kulp D."/>
            <person name="Lai Z."/>
            <person name="Lasko P."/>
            <person name="Lei Y."/>
            <person name="Levitsky A.A."/>
            <person name="Li J.H."/>
            <person name="Li Z."/>
            <person name="Liang Y."/>
            <person name="Lin X."/>
            <person name="Liu X."/>
            <person name="Mattei B."/>
            <person name="McIntosh T.C."/>
            <person name="McLeod M.P."/>
            <person name="McPherson D."/>
            <person name="Merkulov G."/>
            <person name="Milshina N.V."/>
            <person name="Mobarry C."/>
            <person name="Morris J."/>
            <person name="Moshrefi A."/>
            <person name="Mount S.M."/>
            <person name="Moy M."/>
            <person name="Murphy B."/>
            <person name="Murphy L."/>
            <person name="Muzny D.M."/>
            <person name="Nelson D.L."/>
            <person name="Nelson D.R."/>
            <person name="Nelson K.A."/>
            <person name="Nixon K."/>
            <person name="Nusskern D.R."/>
            <person name="Pacleb J.M."/>
            <person name="Palazzolo M."/>
            <person name="Pittman G.S."/>
            <person name="Pan S."/>
            <person name="Pollard J."/>
            <person name="Puri V."/>
            <person name="Reese M.G."/>
            <person name="Reinert K."/>
            <person name="Remington K."/>
            <person name="Saunders R.D.C."/>
            <person name="Scheeler F."/>
            <person name="Shen H."/>
            <person name="Shue B.C."/>
            <person name="Siden-Kiamos I."/>
            <person name="Simpson M."/>
            <person name="Skupski M.P."/>
            <person name="Smith T.J."/>
            <person name="Spier E."/>
            <person name="Spradling A.C."/>
            <person name="Stapleton M."/>
            <person name="Strong R."/>
            <person name="Sun E."/>
            <person name="Svirskas R."/>
            <person name="Tector C."/>
            <person name="Turner R."/>
            <person name="Venter E."/>
            <person name="Wang A.H."/>
            <person name="Wang X."/>
            <person name="Wang Z.-Y."/>
            <person name="Wassarman D.A."/>
            <person name="Weinstock G.M."/>
            <person name="Weissenbach J."/>
            <person name="Williams S.M."/>
            <person name="Woodage T."/>
            <person name="Worley K.C."/>
            <person name="Wu D."/>
            <person name="Yang S."/>
            <person name="Yao Q.A."/>
            <person name="Ye J."/>
            <person name="Yeh R.-F."/>
            <person name="Zaveri J.S."/>
            <person name="Zhan M."/>
            <person name="Zhang G."/>
            <person name="Zhao Q."/>
            <person name="Zheng L."/>
            <person name="Zheng X.H."/>
            <person name="Zhong F.N."/>
            <person name="Zhong W."/>
            <person name="Zhou X."/>
            <person name="Zhu S.C."/>
            <person name="Zhu X."/>
            <person name="Smith H.O."/>
            <person name="Gibbs R.A."/>
            <person name="Myers E.W."/>
            <person name="Rubin G.M."/>
            <person name="Venter J.C."/>
        </authorList>
    </citation>
    <scope>NUCLEOTIDE SEQUENCE [LARGE SCALE GENOMIC DNA]</scope>
    <source>
        <strain>Berkeley</strain>
    </source>
</reference>
<reference key="3">
    <citation type="journal article" date="2002" name="Genome Biol.">
        <title>Annotation of the Drosophila melanogaster euchromatic genome: a systematic review.</title>
        <authorList>
            <person name="Misra S."/>
            <person name="Crosby M.A."/>
            <person name="Mungall C.J."/>
            <person name="Matthews B.B."/>
            <person name="Campbell K.S."/>
            <person name="Hradecky P."/>
            <person name="Huang Y."/>
            <person name="Kaminker J.S."/>
            <person name="Millburn G.H."/>
            <person name="Prochnik S.E."/>
            <person name="Smith C.D."/>
            <person name="Tupy J.L."/>
            <person name="Whitfield E.J."/>
            <person name="Bayraktaroglu L."/>
            <person name="Berman B.P."/>
            <person name="Bettencourt B.R."/>
            <person name="Celniker S.E."/>
            <person name="de Grey A.D.N.J."/>
            <person name="Drysdale R.A."/>
            <person name="Harris N.L."/>
            <person name="Richter J."/>
            <person name="Russo S."/>
            <person name="Schroeder A.J."/>
            <person name="Shu S.Q."/>
            <person name="Stapleton M."/>
            <person name="Yamada C."/>
            <person name="Ashburner M."/>
            <person name="Gelbart W.M."/>
            <person name="Rubin G.M."/>
            <person name="Lewis S.E."/>
        </authorList>
    </citation>
    <scope>GENOME REANNOTATION</scope>
    <source>
        <strain>Berkeley</strain>
    </source>
</reference>
<reference key="4">
    <citation type="journal article" date="2002" name="Genome Biol.">
        <title>A Drosophila full-length cDNA resource.</title>
        <authorList>
            <person name="Stapleton M."/>
            <person name="Carlson J.W."/>
            <person name="Brokstein P."/>
            <person name="Yu C."/>
            <person name="Champe M."/>
            <person name="George R.A."/>
            <person name="Guarin H."/>
            <person name="Kronmiller B."/>
            <person name="Pacleb J.M."/>
            <person name="Park S."/>
            <person name="Wan K.H."/>
            <person name="Rubin G.M."/>
            <person name="Celniker S.E."/>
        </authorList>
    </citation>
    <scope>NUCLEOTIDE SEQUENCE [LARGE SCALE MRNA]</scope>
    <source>
        <strain>Berkeley</strain>
        <tissue>Head</tissue>
    </source>
</reference>
<keyword id="KW-0002">3D-structure</keyword>
<keyword id="KW-0240">DNA-directed RNA polymerase</keyword>
<keyword id="KW-0539">Nucleus</keyword>
<keyword id="KW-1185">Reference proteome</keyword>
<keyword id="KW-0804">Transcription</keyword>